<proteinExistence type="inferred from homology"/>
<feature type="chain" id="PRO_1000013267" description="Large ribosomal subunit protein bL34">
    <location>
        <begin position="1"/>
        <end position="44"/>
    </location>
</feature>
<keyword id="KW-0687">Ribonucleoprotein</keyword>
<keyword id="KW-0689">Ribosomal protein</keyword>
<sequence length="44" mass="5050">MKRTFQPSNLKRKRSHGFRARMATANGRKVLAARRAKGRARLVV</sequence>
<gene>
    <name evidence="1" type="primary">rpmH</name>
    <name type="ordered locus">ASA_4385</name>
</gene>
<dbReference type="EMBL" id="CP000644">
    <property type="protein sequence ID" value="ABO92300.1"/>
    <property type="molecule type" value="Genomic_DNA"/>
</dbReference>
<dbReference type="RefSeq" id="WP_005307156.1">
    <property type="nucleotide sequence ID" value="NC_009348.1"/>
</dbReference>
<dbReference type="SMR" id="A4STS8"/>
<dbReference type="STRING" id="29491.GCA_000820065_00557"/>
<dbReference type="GeneID" id="97859424"/>
<dbReference type="KEGG" id="asa:ASA_4385"/>
<dbReference type="eggNOG" id="COG0230">
    <property type="taxonomic scope" value="Bacteria"/>
</dbReference>
<dbReference type="HOGENOM" id="CLU_129938_2_0_6"/>
<dbReference type="Proteomes" id="UP000000225">
    <property type="component" value="Chromosome"/>
</dbReference>
<dbReference type="GO" id="GO:1990904">
    <property type="term" value="C:ribonucleoprotein complex"/>
    <property type="evidence" value="ECO:0007669"/>
    <property type="project" value="UniProtKB-KW"/>
</dbReference>
<dbReference type="GO" id="GO:0005840">
    <property type="term" value="C:ribosome"/>
    <property type="evidence" value="ECO:0007669"/>
    <property type="project" value="UniProtKB-KW"/>
</dbReference>
<dbReference type="GO" id="GO:0003735">
    <property type="term" value="F:structural constituent of ribosome"/>
    <property type="evidence" value="ECO:0007669"/>
    <property type="project" value="InterPro"/>
</dbReference>
<dbReference type="GO" id="GO:0006412">
    <property type="term" value="P:translation"/>
    <property type="evidence" value="ECO:0007669"/>
    <property type="project" value="UniProtKB-UniRule"/>
</dbReference>
<dbReference type="FunFam" id="1.10.287.3980:FF:000001">
    <property type="entry name" value="Mitochondrial ribosomal protein L34"/>
    <property type="match status" value="1"/>
</dbReference>
<dbReference type="Gene3D" id="1.10.287.3980">
    <property type="match status" value="1"/>
</dbReference>
<dbReference type="HAMAP" id="MF_00391">
    <property type="entry name" value="Ribosomal_bL34"/>
    <property type="match status" value="1"/>
</dbReference>
<dbReference type="InterPro" id="IPR000271">
    <property type="entry name" value="Ribosomal_bL34"/>
</dbReference>
<dbReference type="InterPro" id="IPR020939">
    <property type="entry name" value="Ribosomal_bL34_CS"/>
</dbReference>
<dbReference type="NCBIfam" id="TIGR01030">
    <property type="entry name" value="rpmH_bact"/>
    <property type="match status" value="1"/>
</dbReference>
<dbReference type="PANTHER" id="PTHR14503:SF4">
    <property type="entry name" value="LARGE RIBOSOMAL SUBUNIT PROTEIN BL34M"/>
    <property type="match status" value="1"/>
</dbReference>
<dbReference type="PANTHER" id="PTHR14503">
    <property type="entry name" value="MITOCHONDRIAL RIBOSOMAL PROTEIN 34 FAMILY MEMBER"/>
    <property type="match status" value="1"/>
</dbReference>
<dbReference type="Pfam" id="PF00468">
    <property type="entry name" value="Ribosomal_L34"/>
    <property type="match status" value="1"/>
</dbReference>
<dbReference type="PROSITE" id="PS00784">
    <property type="entry name" value="RIBOSOMAL_L34"/>
    <property type="match status" value="1"/>
</dbReference>
<evidence type="ECO:0000255" key="1">
    <source>
        <dbReference type="HAMAP-Rule" id="MF_00391"/>
    </source>
</evidence>
<evidence type="ECO:0000305" key="2"/>
<comment type="similarity">
    <text evidence="1">Belongs to the bacterial ribosomal protein bL34 family.</text>
</comment>
<name>RL34_AERS4</name>
<organism>
    <name type="scientific">Aeromonas salmonicida (strain A449)</name>
    <dbReference type="NCBI Taxonomy" id="382245"/>
    <lineage>
        <taxon>Bacteria</taxon>
        <taxon>Pseudomonadati</taxon>
        <taxon>Pseudomonadota</taxon>
        <taxon>Gammaproteobacteria</taxon>
        <taxon>Aeromonadales</taxon>
        <taxon>Aeromonadaceae</taxon>
        <taxon>Aeromonas</taxon>
    </lineage>
</organism>
<protein>
    <recommendedName>
        <fullName evidence="1">Large ribosomal subunit protein bL34</fullName>
    </recommendedName>
    <alternativeName>
        <fullName evidence="2">50S ribosomal protein L34</fullName>
    </alternativeName>
</protein>
<reference key="1">
    <citation type="journal article" date="2008" name="BMC Genomics">
        <title>The genome of Aeromonas salmonicida subsp. salmonicida A449: insights into the evolution of a fish pathogen.</title>
        <authorList>
            <person name="Reith M.E."/>
            <person name="Singh R.K."/>
            <person name="Curtis B."/>
            <person name="Boyd J.M."/>
            <person name="Bouevitch A."/>
            <person name="Kimball J."/>
            <person name="Munholland J."/>
            <person name="Murphy C."/>
            <person name="Sarty D."/>
            <person name="Williams J."/>
            <person name="Nash J.H."/>
            <person name="Johnson S.C."/>
            <person name="Brown L.L."/>
        </authorList>
    </citation>
    <scope>NUCLEOTIDE SEQUENCE [LARGE SCALE GENOMIC DNA]</scope>
    <source>
        <strain>A449</strain>
    </source>
</reference>
<accession>A4STS8</accession>